<name>RLMN_PSEU2</name>
<organism>
    <name type="scientific">Pseudomonas syringae pv. syringae (strain B728a)</name>
    <dbReference type="NCBI Taxonomy" id="205918"/>
    <lineage>
        <taxon>Bacteria</taxon>
        <taxon>Pseudomonadati</taxon>
        <taxon>Pseudomonadota</taxon>
        <taxon>Gammaproteobacteria</taxon>
        <taxon>Pseudomonadales</taxon>
        <taxon>Pseudomonadaceae</taxon>
        <taxon>Pseudomonas</taxon>
        <taxon>Pseudomonas syringae</taxon>
    </lineage>
</organism>
<comment type="function">
    <text evidence="1">Specifically methylates position 2 of adenine 2503 in 23S rRNA and position 2 of adenine 37 in tRNAs. m2A2503 modification seems to play a crucial role in the proofreading step occurring at the peptidyl transferase center and thus would serve to optimize ribosomal fidelity.</text>
</comment>
<comment type="catalytic activity">
    <reaction evidence="1">
        <text>adenosine(2503) in 23S rRNA + 2 reduced [2Fe-2S]-[ferredoxin] + 2 S-adenosyl-L-methionine = 2-methyladenosine(2503) in 23S rRNA + 5'-deoxyadenosine + L-methionine + 2 oxidized [2Fe-2S]-[ferredoxin] + S-adenosyl-L-homocysteine</text>
        <dbReference type="Rhea" id="RHEA:42916"/>
        <dbReference type="Rhea" id="RHEA-COMP:10000"/>
        <dbReference type="Rhea" id="RHEA-COMP:10001"/>
        <dbReference type="Rhea" id="RHEA-COMP:10152"/>
        <dbReference type="Rhea" id="RHEA-COMP:10282"/>
        <dbReference type="ChEBI" id="CHEBI:17319"/>
        <dbReference type="ChEBI" id="CHEBI:33737"/>
        <dbReference type="ChEBI" id="CHEBI:33738"/>
        <dbReference type="ChEBI" id="CHEBI:57844"/>
        <dbReference type="ChEBI" id="CHEBI:57856"/>
        <dbReference type="ChEBI" id="CHEBI:59789"/>
        <dbReference type="ChEBI" id="CHEBI:74411"/>
        <dbReference type="ChEBI" id="CHEBI:74497"/>
        <dbReference type="EC" id="2.1.1.192"/>
    </reaction>
</comment>
<comment type="catalytic activity">
    <reaction evidence="1">
        <text>adenosine(37) in tRNA + 2 reduced [2Fe-2S]-[ferredoxin] + 2 S-adenosyl-L-methionine = 2-methyladenosine(37) in tRNA + 5'-deoxyadenosine + L-methionine + 2 oxidized [2Fe-2S]-[ferredoxin] + S-adenosyl-L-homocysteine</text>
        <dbReference type="Rhea" id="RHEA:43332"/>
        <dbReference type="Rhea" id="RHEA-COMP:10000"/>
        <dbReference type="Rhea" id="RHEA-COMP:10001"/>
        <dbReference type="Rhea" id="RHEA-COMP:10162"/>
        <dbReference type="Rhea" id="RHEA-COMP:10485"/>
        <dbReference type="ChEBI" id="CHEBI:17319"/>
        <dbReference type="ChEBI" id="CHEBI:33737"/>
        <dbReference type="ChEBI" id="CHEBI:33738"/>
        <dbReference type="ChEBI" id="CHEBI:57844"/>
        <dbReference type="ChEBI" id="CHEBI:57856"/>
        <dbReference type="ChEBI" id="CHEBI:59789"/>
        <dbReference type="ChEBI" id="CHEBI:74411"/>
        <dbReference type="ChEBI" id="CHEBI:74497"/>
        <dbReference type="EC" id="2.1.1.192"/>
    </reaction>
</comment>
<comment type="cofactor">
    <cofactor evidence="1">
        <name>[4Fe-4S] cluster</name>
        <dbReference type="ChEBI" id="CHEBI:49883"/>
    </cofactor>
    <text evidence="1">Binds 1 [4Fe-4S] cluster. The cluster is coordinated with 3 cysteines and an exchangeable S-adenosyl-L-methionine.</text>
</comment>
<comment type="subcellular location">
    <subcellularLocation>
        <location evidence="1">Cytoplasm</location>
    </subcellularLocation>
</comment>
<comment type="miscellaneous">
    <text evidence="1">Reaction proceeds by a ping-pong mechanism involving intermediate methylation of a conserved cysteine residue.</text>
</comment>
<comment type="similarity">
    <text evidence="1">Belongs to the radical SAM superfamily. RlmN family.</text>
</comment>
<proteinExistence type="inferred from homology"/>
<accession>Q4ZX26</accession>
<feature type="chain" id="PRO_0000350347" description="Dual-specificity RNA methyltransferase RlmN">
    <location>
        <begin position="1"/>
        <end position="382"/>
    </location>
</feature>
<feature type="domain" description="Radical SAM core" evidence="2">
    <location>
        <begin position="102"/>
        <end position="342"/>
    </location>
</feature>
<feature type="active site" description="Proton acceptor" evidence="1">
    <location>
        <position position="96"/>
    </location>
</feature>
<feature type="active site" description="S-methylcysteine intermediate" evidence="1">
    <location>
        <position position="345"/>
    </location>
</feature>
<feature type="binding site" evidence="1">
    <location>
        <position position="116"/>
    </location>
    <ligand>
        <name>[4Fe-4S] cluster</name>
        <dbReference type="ChEBI" id="CHEBI:49883"/>
        <note>4Fe-4S-S-AdoMet</note>
    </ligand>
</feature>
<feature type="binding site" evidence="1">
    <location>
        <position position="120"/>
    </location>
    <ligand>
        <name>[4Fe-4S] cluster</name>
        <dbReference type="ChEBI" id="CHEBI:49883"/>
        <note>4Fe-4S-S-AdoMet</note>
    </ligand>
</feature>
<feature type="binding site" evidence="1">
    <location>
        <position position="123"/>
    </location>
    <ligand>
        <name>[4Fe-4S] cluster</name>
        <dbReference type="ChEBI" id="CHEBI:49883"/>
        <note>4Fe-4S-S-AdoMet</note>
    </ligand>
</feature>
<feature type="binding site" evidence="1">
    <location>
        <begin position="170"/>
        <end position="171"/>
    </location>
    <ligand>
        <name>S-adenosyl-L-methionine</name>
        <dbReference type="ChEBI" id="CHEBI:59789"/>
    </ligand>
</feature>
<feature type="binding site" evidence="1">
    <location>
        <position position="202"/>
    </location>
    <ligand>
        <name>S-adenosyl-L-methionine</name>
        <dbReference type="ChEBI" id="CHEBI:59789"/>
    </ligand>
</feature>
<feature type="binding site" evidence="1">
    <location>
        <begin position="224"/>
        <end position="226"/>
    </location>
    <ligand>
        <name>S-adenosyl-L-methionine</name>
        <dbReference type="ChEBI" id="CHEBI:59789"/>
    </ligand>
</feature>
<feature type="binding site" evidence="1">
    <location>
        <position position="302"/>
    </location>
    <ligand>
        <name>S-adenosyl-L-methionine</name>
        <dbReference type="ChEBI" id="CHEBI:59789"/>
    </ligand>
</feature>
<feature type="disulfide bond" description="(transient)" evidence="1">
    <location>
        <begin position="109"/>
        <end position="345"/>
    </location>
</feature>
<reference key="1">
    <citation type="journal article" date="2005" name="Proc. Natl. Acad. Sci. U.S.A.">
        <title>Comparison of the complete genome sequences of Pseudomonas syringae pv. syringae B728a and pv. tomato DC3000.</title>
        <authorList>
            <person name="Feil H."/>
            <person name="Feil W.S."/>
            <person name="Chain P."/>
            <person name="Larimer F."/>
            <person name="Dibartolo G."/>
            <person name="Copeland A."/>
            <person name="Lykidis A."/>
            <person name="Trong S."/>
            <person name="Nolan M."/>
            <person name="Goltsman E."/>
            <person name="Thiel J."/>
            <person name="Malfatti S."/>
            <person name="Loper J.E."/>
            <person name="Lapidus A."/>
            <person name="Detter J.C."/>
            <person name="Land M."/>
            <person name="Richardson P.M."/>
            <person name="Kyrpides N.C."/>
            <person name="Ivanova N."/>
            <person name="Lindow S.E."/>
        </authorList>
    </citation>
    <scope>NUCLEOTIDE SEQUENCE [LARGE SCALE GENOMIC DNA]</scope>
    <source>
        <strain>B728a</strain>
    </source>
</reference>
<evidence type="ECO:0000255" key="1">
    <source>
        <dbReference type="HAMAP-Rule" id="MF_01849"/>
    </source>
</evidence>
<evidence type="ECO:0000255" key="2">
    <source>
        <dbReference type="PROSITE-ProRule" id="PRU01266"/>
    </source>
</evidence>
<dbReference type="EC" id="2.1.1.192" evidence="1"/>
<dbReference type="EMBL" id="CP000075">
    <property type="protein sequence ID" value="AAY36296.1"/>
    <property type="molecule type" value="Genomic_DNA"/>
</dbReference>
<dbReference type="RefSeq" id="WP_011266908.1">
    <property type="nucleotide sequence ID" value="NC_007005.1"/>
</dbReference>
<dbReference type="RefSeq" id="YP_234334.1">
    <property type="nucleotide sequence ID" value="NC_007005.1"/>
</dbReference>
<dbReference type="SMR" id="Q4ZX26"/>
<dbReference type="STRING" id="205918.Psyr_1245"/>
<dbReference type="KEGG" id="psb:Psyr_1245"/>
<dbReference type="PATRIC" id="fig|205918.7.peg.1277"/>
<dbReference type="eggNOG" id="COG0820">
    <property type="taxonomic scope" value="Bacteria"/>
</dbReference>
<dbReference type="HOGENOM" id="CLU_029101_0_0_6"/>
<dbReference type="OrthoDB" id="9793973at2"/>
<dbReference type="Proteomes" id="UP000000426">
    <property type="component" value="Chromosome"/>
</dbReference>
<dbReference type="GO" id="GO:0005737">
    <property type="term" value="C:cytoplasm"/>
    <property type="evidence" value="ECO:0007669"/>
    <property type="project" value="UniProtKB-SubCell"/>
</dbReference>
<dbReference type="GO" id="GO:0051539">
    <property type="term" value="F:4 iron, 4 sulfur cluster binding"/>
    <property type="evidence" value="ECO:0007669"/>
    <property type="project" value="UniProtKB-UniRule"/>
</dbReference>
<dbReference type="GO" id="GO:0046872">
    <property type="term" value="F:metal ion binding"/>
    <property type="evidence" value="ECO:0007669"/>
    <property type="project" value="UniProtKB-KW"/>
</dbReference>
<dbReference type="GO" id="GO:0070040">
    <property type="term" value="F:rRNA (adenine(2503)-C2-)-methyltransferase activity"/>
    <property type="evidence" value="ECO:0007669"/>
    <property type="project" value="UniProtKB-UniRule"/>
</dbReference>
<dbReference type="GO" id="GO:0019843">
    <property type="term" value="F:rRNA binding"/>
    <property type="evidence" value="ECO:0007669"/>
    <property type="project" value="UniProtKB-UniRule"/>
</dbReference>
<dbReference type="GO" id="GO:0002935">
    <property type="term" value="F:tRNA (adenine(37)-C2)-methyltransferase activity"/>
    <property type="evidence" value="ECO:0007669"/>
    <property type="project" value="UniProtKB-UniRule"/>
</dbReference>
<dbReference type="GO" id="GO:0000049">
    <property type="term" value="F:tRNA binding"/>
    <property type="evidence" value="ECO:0007669"/>
    <property type="project" value="UniProtKB-UniRule"/>
</dbReference>
<dbReference type="GO" id="GO:0070475">
    <property type="term" value="P:rRNA base methylation"/>
    <property type="evidence" value="ECO:0007669"/>
    <property type="project" value="UniProtKB-UniRule"/>
</dbReference>
<dbReference type="GO" id="GO:0030488">
    <property type="term" value="P:tRNA methylation"/>
    <property type="evidence" value="ECO:0007669"/>
    <property type="project" value="UniProtKB-UniRule"/>
</dbReference>
<dbReference type="CDD" id="cd01335">
    <property type="entry name" value="Radical_SAM"/>
    <property type="match status" value="1"/>
</dbReference>
<dbReference type="FunFam" id="1.10.150.530:FF:000003">
    <property type="entry name" value="Dual-specificity RNA methyltransferase RlmN"/>
    <property type="match status" value="1"/>
</dbReference>
<dbReference type="FunFam" id="3.20.20.70:FF:000008">
    <property type="entry name" value="Dual-specificity RNA methyltransferase RlmN"/>
    <property type="match status" value="1"/>
</dbReference>
<dbReference type="Gene3D" id="1.10.150.530">
    <property type="match status" value="1"/>
</dbReference>
<dbReference type="Gene3D" id="3.20.20.70">
    <property type="entry name" value="Aldolase class I"/>
    <property type="match status" value="1"/>
</dbReference>
<dbReference type="HAMAP" id="MF_01849">
    <property type="entry name" value="RNA_methyltr_RlmN"/>
    <property type="match status" value="1"/>
</dbReference>
<dbReference type="InterPro" id="IPR013785">
    <property type="entry name" value="Aldolase_TIM"/>
</dbReference>
<dbReference type="InterPro" id="IPR040072">
    <property type="entry name" value="Methyltransferase_A"/>
</dbReference>
<dbReference type="InterPro" id="IPR048641">
    <property type="entry name" value="RlmN_N"/>
</dbReference>
<dbReference type="InterPro" id="IPR027492">
    <property type="entry name" value="RNA_MTrfase_RlmN"/>
</dbReference>
<dbReference type="InterPro" id="IPR004383">
    <property type="entry name" value="rRNA_lsu_MTrfase_RlmN/Cfr"/>
</dbReference>
<dbReference type="InterPro" id="IPR007197">
    <property type="entry name" value="rSAM"/>
</dbReference>
<dbReference type="NCBIfam" id="TIGR00048">
    <property type="entry name" value="rRNA_mod_RlmN"/>
    <property type="match status" value="1"/>
</dbReference>
<dbReference type="PANTHER" id="PTHR30544">
    <property type="entry name" value="23S RRNA METHYLTRANSFERASE"/>
    <property type="match status" value="1"/>
</dbReference>
<dbReference type="PANTHER" id="PTHR30544:SF5">
    <property type="entry name" value="RADICAL SAM CORE DOMAIN-CONTAINING PROTEIN"/>
    <property type="match status" value="1"/>
</dbReference>
<dbReference type="Pfam" id="PF04055">
    <property type="entry name" value="Radical_SAM"/>
    <property type="match status" value="1"/>
</dbReference>
<dbReference type="Pfam" id="PF21016">
    <property type="entry name" value="RlmN_N"/>
    <property type="match status" value="1"/>
</dbReference>
<dbReference type="PIRSF" id="PIRSF006004">
    <property type="entry name" value="CHP00048"/>
    <property type="match status" value="1"/>
</dbReference>
<dbReference type="SFLD" id="SFLDF00275">
    <property type="entry name" value="adenosine_C2_methyltransferase"/>
    <property type="match status" value="1"/>
</dbReference>
<dbReference type="SFLD" id="SFLDG01062">
    <property type="entry name" value="methyltransferase_(Class_A)"/>
    <property type="match status" value="1"/>
</dbReference>
<dbReference type="SUPFAM" id="SSF102114">
    <property type="entry name" value="Radical SAM enzymes"/>
    <property type="match status" value="1"/>
</dbReference>
<dbReference type="PROSITE" id="PS51918">
    <property type="entry name" value="RADICAL_SAM"/>
    <property type="match status" value="1"/>
</dbReference>
<gene>
    <name evidence="1" type="primary">rlmN</name>
    <name type="ordered locus">Psyr_1245</name>
</gene>
<keyword id="KW-0004">4Fe-4S</keyword>
<keyword id="KW-0963">Cytoplasm</keyword>
<keyword id="KW-1015">Disulfide bond</keyword>
<keyword id="KW-0408">Iron</keyword>
<keyword id="KW-0411">Iron-sulfur</keyword>
<keyword id="KW-0479">Metal-binding</keyword>
<keyword id="KW-0489">Methyltransferase</keyword>
<keyword id="KW-0698">rRNA processing</keyword>
<keyword id="KW-0949">S-adenosyl-L-methionine</keyword>
<keyword id="KW-0808">Transferase</keyword>
<keyword id="KW-0819">tRNA processing</keyword>
<sequence length="382" mass="42283">MIASTGKTNLLGLTQQEMEKFFDSIGEKRFRAGQVMKWIHHFGVDDFDAMTNVSKALREKLKACAEVRGPEVVSEDISSDGTRKWVVRVESGSCVETVYIPQGKRGTLCVSSQAGCALDCSFCSTGKQGFNSNLTAAEVIGQVWIANKSFGSVPATVDRAITNVVMMGMGEPLLNFDNVIAAMHLMMDDLGYGISKRRVTLSTSGVVPMIDELSKHIDVSLALSLHAPNDALRNQLVPINKKYPLKMLLESCRRYMSSLGEKRVLTIEYTMLKDINDKVEHAVEMIELLKDTPCKINLIPFNPFPHSGYERPSNNAIRRFQDLLHQAGYNVTVRTTRGEDIDAACGQLVGQVMDRTRRSERYIAVRELSAEADAAPVAVTRT</sequence>
<protein>
    <recommendedName>
        <fullName evidence="1">Dual-specificity RNA methyltransferase RlmN</fullName>
        <ecNumber evidence="1">2.1.1.192</ecNumber>
    </recommendedName>
    <alternativeName>
        <fullName evidence="1">23S rRNA (adenine(2503)-C(2))-methyltransferase</fullName>
    </alternativeName>
    <alternativeName>
        <fullName evidence="1">23S rRNA m2A2503 methyltransferase</fullName>
    </alternativeName>
    <alternativeName>
        <fullName evidence="1">Ribosomal RNA large subunit methyltransferase N</fullName>
    </alternativeName>
    <alternativeName>
        <fullName evidence="1">tRNA (adenine(37)-C(2))-methyltransferase</fullName>
    </alternativeName>
    <alternativeName>
        <fullName evidence="1">tRNA m2A37 methyltransferase</fullName>
    </alternativeName>
</protein>